<organism>
    <name type="scientific">Streptococcus pyogenes serotype M12 (strain MGAS2096)</name>
    <dbReference type="NCBI Taxonomy" id="370553"/>
    <lineage>
        <taxon>Bacteria</taxon>
        <taxon>Bacillati</taxon>
        <taxon>Bacillota</taxon>
        <taxon>Bacilli</taxon>
        <taxon>Lactobacillales</taxon>
        <taxon>Streptococcaceae</taxon>
        <taxon>Streptococcus</taxon>
    </lineage>
</organism>
<evidence type="ECO:0000255" key="1">
    <source>
        <dbReference type="HAMAP-Rule" id="MF_01588"/>
    </source>
</evidence>
<name>DNLJ_STRPB</name>
<comment type="function">
    <text evidence="1">DNA ligase that catalyzes the formation of phosphodiester linkages between 5'-phosphoryl and 3'-hydroxyl groups in double-stranded DNA using NAD as a coenzyme and as the energy source for the reaction. It is essential for DNA replication and repair of damaged DNA.</text>
</comment>
<comment type="catalytic activity">
    <reaction evidence="1">
        <text>NAD(+) + (deoxyribonucleotide)n-3'-hydroxyl + 5'-phospho-(deoxyribonucleotide)m = (deoxyribonucleotide)n+m + AMP + beta-nicotinamide D-nucleotide.</text>
        <dbReference type="EC" id="6.5.1.2"/>
    </reaction>
</comment>
<comment type="cofactor">
    <cofactor evidence="1">
        <name>Mg(2+)</name>
        <dbReference type="ChEBI" id="CHEBI:18420"/>
    </cofactor>
    <cofactor evidence="1">
        <name>Mn(2+)</name>
        <dbReference type="ChEBI" id="CHEBI:29035"/>
    </cofactor>
</comment>
<comment type="similarity">
    <text evidence="1">Belongs to the NAD-dependent DNA ligase family. LigA subfamily.</text>
</comment>
<dbReference type="EC" id="6.5.1.2" evidence="1"/>
<dbReference type="EMBL" id="CP000261">
    <property type="protein sequence ID" value="ABF35687.1"/>
    <property type="molecule type" value="Genomic_DNA"/>
</dbReference>
<dbReference type="SMR" id="Q1JCM1"/>
<dbReference type="KEGG" id="spj:MGAS2096_Spy0635"/>
<dbReference type="HOGENOM" id="CLU_007764_2_1_9"/>
<dbReference type="GO" id="GO:0005829">
    <property type="term" value="C:cytosol"/>
    <property type="evidence" value="ECO:0007669"/>
    <property type="project" value="TreeGrafter"/>
</dbReference>
<dbReference type="GO" id="GO:0003677">
    <property type="term" value="F:DNA binding"/>
    <property type="evidence" value="ECO:0007669"/>
    <property type="project" value="InterPro"/>
</dbReference>
<dbReference type="GO" id="GO:0003911">
    <property type="term" value="F:DNA ligase (NAD+) activity"/>
    <property type="evidence" value="ECO:0007669"/>
    <property type="project" value="UniProtKB-UniRule"/>
</dbReference>
<dbReference type="GO" id="GO:0046872">
    <property type="term" value="F:metal ion binding"/>
    <property type="evidence" value="ECO:0007669"/>
    <property type="project" value="UniProtKB-KW"/>
</dbReference>
<dbReference type="GO" id="GO:0006281">
    <property type="term" value="P:DNA repair"/>
    <property type="evidence" value="ECO:0007669"/>
    <property type="project" value="UniProtKB-KW"/>
</dbReference>
<dbReference type="GO" id="GO:0006260">
    <property type="term" value="P:DNA replication"/>
    <property type="evidence" value="ECO:0007669"/>
    <property type="project" value="UniProtKB-KW"/>
</dbReference>
<dbReference type="CDD" id="cd17748">
    <property type="entry name" value="BRCT_DNA_ligase_like"/>
    <property type="match status" value="1"/>
</dbReference>
<dbReference type="CDD" id="cd00114">
    <property type="entry name" value="LIGANc"/>
    <property type="match status" value="1"/>
</dbReference>
<dbReference type="FunFam" id="1.10.150.20:FF:000007">
    <property type="entry name" value="DNA ligase"/>
    <property type="match status" value="1"/>
</dbReference>
<dbReference type="FunFam" id="1.10.287.610:FF:000002">
    <property type="entry name" value="DNA ligase"/>
    <property type="match status" value="1"/>
</dbReference>
<dbReference type="FunFam" id="2.40.50.140:FF:000012">
    <property type="entry name" value="DNA ligase"/>
    <property type="match status" value="1"/>
</dbReference>
<dbReference type="FunFam" id="3.30.470.30:FF:000001">
    <property type="entry name" value="DNA ligase"/>
    <property type="match status" value="1"/>
</dbReference>
<dbReference type="Gene3D" id="6.20.10.30">
    <property type="match status" value="1"/>
</dbReference>
<dbReference type="Gene3D" id="1.10.150.20">
    <property type="entry name" value="5' to 3' exonuclease, C-terminal subdomain"/>
    <property type="match status" value="2"/>
</dbReference>
<dbReference type="Gene3D" id="3.40.50.10190">
    <property type="entry name" value="BRCT domain"/>
    <property type="match status" value="1"/>
</dbReference>
<dbReference type="Gene3D" id="3.30.470.30">
    <property type="entry name" value="DNA ligase/mRNA capping enzyme"/>
    <property type="match status" value="1"/>
</dbReference>
<dbReference type="Gene3D" id="1.10.287.610">
    <property type="entry name" value="Helix hairpin bin"/>
    <property type="match status" value="1"/>
</dbReference>
<dbReference type="Gene3D" id="2.40.50.140">
    <property type="entry name" value="Nucleic acid-binding proteins"/>
    <property type="match status" value="1"/>
</dbReference>
<dbReference type="HAMAP" id="MF_01588">
    <property type="entry name" value="DNA_ligase_A"/>
    <property type="match status" value="1"/>
</dbReference>
<dbReference type="InterPro" id="IPR001357">
    <property type="entry name" value="BRCT_dom"/>
</dbReference>
<dbReference type="InterPro" id="IPR036420">
    <property type="entry name" value="BRCT_dom_sf"/>
</dbReference>
<dbReference type="InterPro" id="IPR041663">
    <property type="entry name" value="DisA/LigA_HHH"/>
</dbReference>
<dbReference type="InterPro" id="IPR001679">
    <property type="entry name" value="DNA_ligase"/>
</dbReference>
<dbReference type="InterPro" id="IPR018239">
    <property type="entry name" value="DNA_ligase_AS"/>
</dbReference>
<dbReference type="InterPro" id="IPR033136">
    <property type="entry name" value="DNA_ligase_CS"/>
</dbReference>
<dbReference type="InterPro" id="IPR013839">
    <property type="entry name" value="DNAligase_adenylation"/>
</dbReference>
<dbReference type="InterPro" id="IPR013840">
    <property type="entry name" value="DNAligase_N"/>
</dbReference>
<dbReference type="InterPro" id="IPR003583">
    <property type="entry name" value="Hlx-hairpin-Hlx_DNA-bd_motif"/>
</dbReference>
<dbReference type="InterPro" id="IPR012340">
    <property type="entry name" value="NA-bd_OB-fold"/>
</dbReference>
<dbReference type="InterPro" id="IPR004150">
    <property type="entry name" value="NAD_DNA_ligase_OB"/>
</dbReference>
<dbReference type="InterPro" id="IPR010994">
    <property type="entry name" value="RuvA_2-like"/>
</dbReference>
<dbReference type="InterPro" id="IPR004149">
    <property type="entry name" value="Znf_DNAligase_C4"/>
</dbReference>
<dbReference type="NCBIfam" id="TIGR00575">
    <property type="entry name" value="dnlj"/>
    <property type="match status" value="1"/>
</dbReference>
<dbReference type="NCBIfam" id="NF005932">
    <property type="entry name" value="PRK07956.1"/>
    <property type="match status" value="1"/>
</dbReference>
<dbReference type="PANTHER" id="PTHR23389">
    <property type="entry name" value="CHROMOSOME TRANSMISSION FIDELITY FACTOR 18"/>
    <property type="match status" value="1"/>
</dbReference>
<dbReference type="PANTHER" id="PTHR23389:SF9">
    <property type="entry name" value="DNA LIGASE"/>
    <property type="match status" value="1"/>
</dbReference>
<dbReference type="Pfam" id="PF00533">
    <property type="entry name" value="BRCT"/>
    <property type="match status" value="1"/>
</dbReference>
<dbReference type="Pfam" id="PF01653">
    <property type="entry name" value="DNA_ligase_aden"/>
    <property type="match status" value="1"/>
</dbReference>
<dbReference type="Pfam" id="PF03120">
    <property type="entry name" value="DNA_ligase_OB"/>
    <property type="match status" value="1"/>
</dbReference>
<dbReference type="Pfam" id="PF03119">
    <property type="entry name" value="DNA_ligase_ZBD"/>
    <property type="match status" value="1"/>
</dbReference>
<dbReference type="Pfam" id="PF12826">
    <property type="entry name" value="HHH_2"/>
    <property type="match status" value="1"/>
</dbReference>
<dbReference type="Pfam" id="PF14520">
    <property type="entry name" value="HHH_5"/>
    <property type="match status" value="1"/>
</dbReference>
<dbReference type="PIRSF" id="PIRSF001604">
    <property type="entry name" value="LigA"/>
    <property type="match status" value="1"/>
</dbReference>
<dbReference type="SMART" id="SM00292">
    <property type="entry name" value="BRCT"/>
    <property type="match status" value="1"/>
</dbReference>
<dbReference type="SMART" id="SM00278">
    <property type="entry name" value="HhH1"/>
    <property type="match status" value="3"/>
</dbReference>
<dbReference type="SMART" id="SM00532">
    <property type="entry name" value="LIGANc"/>
    <property type="match status" value="1"/>
</dbReference>
<dbReference type="SUPFAM" id="SSF52113">
    <property type="entry name" value="BRCT domain"/>
    <property type="match status" value="1"/>
</dbReference>
<dbReference type="SUPFAM" id="SSF56091">
    <property type="entry name" value="DNA ligase/mRNA capping enzyme, catalytic domain"/>
    <property type="match status" value="1"/>
</dbReference>
<dbReference type="SUPFAM" id="SSF50249">
    <property type="entry name" value="Nucleic acid-binding proteins"/>
    <property type="match status" value="1"/>
</dbReference>
<dbReference type="SUPFAM" id="SSF47781">
    <property type="entry name" value="RuvA domain 2-like"/>
    <property type="match status" value="1"/>
</dbReference>
<dbReference type="PROSITE" id="PS50172">
    <property type="entry name" value="BRCT"/>
    <property type="match status" value="1"/>
</dbReference>
<dbReference type="PROSITE" id="PS01055">
    <property type="entry name" value="DNA_LIGASE_N1"/>
    <property type="match status" value="1"/>
</dbReference>
<dbReference type="PROSITE" id="PS01056">
    <property type="entry name" value="DNA_LIGASE_N2"/>
    <property type="match status" value="1"/>
</dbReference>
<feature type="chain" id="PRO_0000313458" description="DNA ligase">
    <location>
        <begin position="1"/>
        <end position="652"/>
    </location>
</feature>
<feature type="domain" description="BRCT" evidence="1">
    <location>
        <begin position="577"/>
        <end position="652"/>
    </location>
</feature>
<feature type="active site" description="N6-AMP-lysine intermediate" evidence="1">
    <location>
        <position position="109"/>
    </location>
</feature>
<feature type="binding site" evidence="1">
    <location>
        <begin position="29"/>
        <end position="33"/>
    </location>
    <ligand>
        <name>NAD(+)</name>
        <dbReference type="ChEBI" id="CHEBI:57540"/>
    </ligand>
</feature>
<feature type="binding site" evidence="1">
    <location>
        <begin position="78"/>
        <end position="79"/>
    </location>
    <ligand>
        <name>NAD(+)</name>
        <dbReference type="ChEBI" id="CHEBI:57540"/>
    </ligand>
</feature>
<feature type="binding site" evidence="1">
    <location>
        <position position="107"/>
    </location>
    <ligand>
        <name>NAD(+)</name>
        <dbReference type="ChEBI" id="CHEBI:57540"/>
    </ligand>
</feature>
<feature type="binding site" evidence="1">
    <location>
        <position position="130"/>
    </location>
    <ligand>
        <name>NAD(+)</name>
        <dbReference type="ChEBI" id="CHEBI:57540"/>
    </ligand>
</feature>
<feature type="binding site" evidence="1">
    <location>
        <position position="164"/>
    </location>
    <ligand>
        <name>NAD(+)</name>
        <dbReference type="ChEBI" id="CHEBI:57540"/>
    </ligand>
</feature>
<feature type="binding site" evidence="1">
    <location>
        <position position="278"/>
    </location>
    <ligand>
        <name>NAD(+)</name>
        <dbReference type="ChEBI" id="CHEBI:57540"/>
    </ligand>
</feature>
<feature type="binding site" evidence="1">
    <location>
        <position position="302"/>
    </location>
    <ligand>
        <name>NAD(+)</name>
        <dbReference type="ChEBI" id="CHEBI:57540"/>
    </ligand>
</feature>
<feature type="binding site" evidence="1">
    <location>
        <position position="395"/>
    </location>
    <ligand>
        <name>Zn(2+)</name>
        <dbReference type="ChEBI" id="CHEBI:29105"/>
    </ligand>
</feature>
<feature type="binding site" evidence="1">
    <location>
        <position position="398"/>
    </location>
    <ligand>
        <name>Zn(2+)</name>
        <dbReference type="ChEBI" id="CHEBI:29105"/>
    </ligand>
</feature>
<feature type="binding site" evidence="1">
    <location>
        <position position="413"/>
    </location>
    <ligand>
        <name>Zn(2+)</name>
        <dbReference type="ChEBI" id="CHEBI:29105"/>
    </ligand>
</feature>
<feature type="binding site" evidence="1">
    <location>
        <position position="418"/>
    </location>
    <ligand>
        <name>Zn(2+)</name>
        <dbReference type="ChEBI" id="CHEBI:29105"/>
    </ligand>
</feature>
<reference key="1">
    <citation type="journal article" date="2006" name="Proc. Natl. Acad. Sci. U.S.A.">
        <title>Molecular genetic anatomy of inter- and intraserotype variation in the human bacterial pathogen group A Streptococcus.</title>
        <authorList>
            <person name="Beres S.B."/>
            <person name="Richter E.W."/>
            <person name="Nagiec M.J."/>
            <person name="Sumby P."/>
            <person name="Porcella S.F."/>
            <person name="DeLeo F.R."/>
            <person name="Musser J.M."/>
        </authorList>
    </citation>
    <scope>NUCLEOTIDE SEQUENCE [LARGE SCALE GENOMIC DNA]</scope>
    <source>
        <strain>MGAS2096</strain>
    </source>
</reference>
<proteinExistence type="inferred from homology"/>
<sequence length="652" mass="72335">MKKRIKELTDLLNRYRYDYYTKDAPSVSDSDYDKLYRELVTLEQSYPEYVLQDSPTQQVGGTILKGFEKYRHQYPLFSLQDAFSREELDAFDKRVKAEFPNATYLAELKIDGLSISLSYENGFLQVGATRGDGNIGENITENIKKIKDIPHQLSEPLTITVRGEAYMSRQSFKAINEARQENGETEFANPRNAAAGTLRQLDTSVVAKRQLATFLYQEASPTARNQQNEVLAELAGLGFSVNPYYQLTSSMDEIWDFIKTIEAKRDQLAYDIDGVVIKVNSLAMQEELGFTVKAPRWAIAYKFPAEEKEAEILSVDWTVGRTGVVTPTANLTPVQLAGTTVSRATLHNVDYIAEKDIRIGDTVIVYKAGDIIPAVLNVVMSKRNQQEVMLIPKLCPSCGSELVHFEDEVALRCINPLCPSLIQRSLEHFASRDAMNITGLGPAIVEKLFLAGFVHDVADIYQLTKENFMQLDGIKEKSADKLLAAIEASKSNSAEKLLFGLGIRHIGSKVSRLILEVYGDISALLTAKEEEIARIDGLGSTIAQSLTQYFEQKTAAILVDELKTAGVNMHYSGQKVNSDAALFGLTVVLTGKLNQLNRNEAKDKLEALGAKVTGSVSKKTDLVIAGSDAGSKLEKAKSLGIRIEDEDWLRQL</sequence>
<keyword id="KW-0227">DNA damage</keyword>
<keyword id="KW-0234">DNA repair</keyword>
<keyword id="KW-0235">DNA replication</keyword>
<keyword id="KW-0436">Ligase</keyword>
<keyword id="KW-0460">Magnesium</keyword>
<keyword id="KW-0464">Manganese</keyword>
<keyword id="KW-0479">Metal-binding</keyword>
<keyword id="KW-0520">NAD</keyword>
<keyword id="KW-0862">Zinc</keyword>
<protein>
    <recommendedName>
        <fullName evidence="1">DNA ligase</fullName>
        <ecNumber evidence="1">6.5.1.2</ecNumber>
    </recommendedName>
    <alternativeName>
        <fullName evidence="1">Polydeoxyribonucleotide synthase [NAD(+)]</fullName>
    </alternativeName>
</protein>
<gene>
    <name evidence="1" type="primary">ligA</name>
    <name type="ordered locus">MGAS2096_Spy0635</name>
</gene>
<accession>Q1JCM1</accession>